<organism>
    <name type="scientific">Buchnera aphidicola subsp. Acyrthosiphon pisum (strain Tuc7)</name>
    <dbReference type="NCBI Taxonomy" id="561501"/>
    <lineage>
        <taxon>Bacteria</taxon>
        <taxon>Pseudomonadati</taxon>
        <taxon>Pseudomonadota</taxon>
        <taxon>Gammaproteobacteria</taxon>
        <taxon>Enterobacterales</taxon>
        <taxon>Erwiniaceae</taxon>
        <taxon>Buchnera</taxon>
    </lineage>
</organism>
<feature type="chain" id="PRO_1000203515" description="Phosphoserine aminotransferase">
    <location>
        <begin position="1"/>
        <end position="361"/>
    </location>
</feature>
<feature type="binding site" evidence="1">
    <location>
        <position position="42"/>
    </location>
    <ligand>
        <name>L-glutamate</name>
        <dbReference type="ChEBI" id="CHEBI:29985"/>
    </ligand>
</feature>
<feature type="binding site" evidence="1">
    <location>
        <begin position="76"/>
        <end position="77"/>
    </location>
    <ligand>
        <name>pyridoxal 5'-phosphate</name>
        <dbReference type="ChEBI" id="CHEBI:597326"/>
    </ligand>
</feature>
<feature type="binding site" evidence="1">
    <location>
        <position position="102"/>
    </location>
    <ligand>
        <name>pyridoxal 5'-phosphate</name>
        <dbReference type="ChEBI" id="CHEBI:597326"/>
    </ligand>
</feature>
<feature type="binding site" evidence="1">
    <location>
        <position position="153"/>
    </location>
    <ligand>
        <name>pyridoxal 5'-phosphate</name>
        <dbReference type="ChEBI" id="CHEBI:597326"/>
    </ligand>
</feature>
<feature type="binding site" evidence="1">
    <location>
        <position position="173"/>
    </location>
    <ligand>
        <name>pyridoxal 5'-phosphate</name>
        <dbReference type="ChEBI" id="CHEBI:597326"/>
    </ligand>
</feature>
<feature type="binding site" evidence="1">
    <location>
        <position position="196"/>
    </location>
    <ligand>
        <name>pyridoxal 5'-phosphate</name>
        <dbReference type="ChEBI" id="CHEBI:597326"/>
    </ligand>
</feature>
<feature type="binding site" evidence="1">
    <location>
        <begin position="238"/>
        <end position="239"/>
    </location>
    <ligand>
        <name>pyridoxal 5'-phosphate</name>
        <dbReference type="ChEBI" id="CHEBI:597326"/>
    </ligand>
</feature>
<feature type="modified residue" description="N6-(pyridoxal phosphate)lysine" evidence="1">
    <location>
        <position position="197"/>
    </location>
</feature>
<dbReference type="EC" id="2.6.1.52" evidence="1"/>
<dbReference type="EMBL" id="CP001158">
    <property type="protein sequence ID" value="ACL30119.1"/>
    <property type="molecule type" value="Genomic_DNA"/>
</dbReference>
<dbReference type="RefSeq" id="WP_012619501.1">
    <property type="nucleotide sequence ID" value="NC_011834.1"/>
</dbReference>
<dbReference type="SMR" id="B8D7K4"/>
<dbReference type="KEGG" id="bau:BUAPTUC7_306"/>
<dbReference type="HOGENOM" id="CLU_034866_0_2_6"/>
<dbReference type="UniPathway" id="UPA00135">
    <property type="reaction ID" value="UER00197"/>
</dbReference>
<dbReference type="UniPathway" id="UPA00244">
    <property type="reaction ID" value="UER00311"/>
</dbReference>
<dbReference type="GO" id="GO:0005737">
    <property type="term" value="C:cytoplasm"/>
    <property type="evidence" value="ECO:0007669"/>
    <property type="project" value="UniProtKB-SubCell"/>
</dbReference>
<dbReference type="GO" id="GO:0004648">
    <property type="term" value="F:O-phospho-L-serine:2-oxoglutarate aminotransferase activity"/>
    <property type="evidence" value="ECO:0007669"/>
    <property type="project" value="UniProtKB-UniRule"/>
</dbReference>
<dbReference type="GO" id="GO:0030170">
    <property type="term" value="F:pyridoxal phosphate binding"/>
    <property type="evidence" value="ECO:0007669"/>
    <property type="project" value="UniProtKB-UniRule"/>
</dbReference>
<dbReference type="GO" id="GO:0006564">
    <property type="term" value="P:L-serine biosynthetic process"/>
    <property type="evidence" value="ECO:0007669"/>
    <property type="project" value="UniProtKB-UniRule"/>
</dbReference>
<dbReference type="GO" id="GO:0008615">
    <property type="term" value="P:pyridoxine biosynthetic process"/>
    <property type="evidence" value="ECO:0007669"/>
    <property type="project" value="UniProtKB-UniRule"/>
</dbReference>
<dbReference type="FunFam" id="3.40.640.10:FF:000010">
    <property type="entry name" value="Phosphoserine aminotransferase"/>
    <property type="match status" value="1"/>
</dbReference>
<dbReference type="FunFam" id="3.90.1150.10:FF:000006">
    <property type="entry name" value="Phosphoserine aminotransferase"/>
    <property type="match status" value="1"/>
</dbReference>
<dbReference type="Gene3D" id="3.90.1150.10">
    <property type="entry name" value="Aspartate Aminotransferase, domain 1"/>
    <property type="match status" value="1"/>
</dbReference>
<dbReference type="Gene3D" id="3.40.640.10">
    <property type="entry name" value="Type I PLP-dependent aspartate aminotransferase-like (Major domain)"/>
    <property type="match status" value="1"/>
</dbReference>
<dbReference type="HAMAP" id="MF_00160">
    <property type="entry name" value="SerC_aminotrans_5"/>
    <property type="match status" value="1"/>
</dbReference>
<dbReference type="InterPro" id="IPR000192">
    <property type="entry name" value="Aminotrans_V_dom"/>
</dbReference>
<dbReference type="InterPro" id="IPR020578">
    <property type="entry name" value="Aminotrans_V_PyrdxlP_BS"/>
</dbReference>
<dbReference type="InterPro" id="IPR022278">
    <property type="entry name" value="Pser_aminoTfrase"/>
</dbReference>
<dbReference type="InterPro" id="IPR015424">
    <property type="entry name" value="PyrdxlP-dep_Trfase"/>
</dbReference>
<dbReference type="InterPro" id="IPR015421">
    <property type="entry name" value="PyrdxlP-dep_Trfase_major"/>
</dbReference>
<dbReference type="InterPro" id="IPR015422">
    <property type="entry name" value="PyrdxlP-dep_Trfase_small"/>
</dbReference>
<dbReference type="NCBIfam" id="NF003764">
    <property type="entry name" value="PRK05355.1"/>
    <property type="match status" value="1"/>
</dbReference>
<dbReference type="NCBIfam" id="TIGR01364">
    <property type="entry name" value="serC_1"/>
    <property type="match status" value="1"/>
</dbReference>
<dbReference type="PANTHER" id="PTHR43247">
    <property type="entry name" value="PHOSPHOSERINE AMINOTRANSFERASE"/>
    <property type="match status" value="1"/>
</dbReference>
<dbReference type="PANTHER" id="PTHR43247:SF1">
    <property type="entry name" value="PHOSPHOSERINE AMINOTRANSFERASE"/>
    <property type="match status" value="1"/>
</dbReference>
<dbReference type="Pfam" id="PF00266">
    <property type="entry name" value="Aminotran_5"/>
    <property type="match status" value="1"/>
</dbReference>
<dbReference type="PIRSF" id="PIRSF000525">
    <property type="entry name" value="SerC"/>
    <property type="match status" value="1"/>
</dbReference>
<dbReference type="SUPFAM" id="SSF53383">
    <property type="entry name" value="PLP-dependent transferases"/>
    <property type="match status" value="1"/>
</dbReference>
<dbReference type="PROSITE" id="PS00595">
    <property type="entry name" value="AA_TRANSFER_CLASS_5"/>
    <property type="match status" value="1"/>
</dbReference>
<proteinExistence type="inferred from homology"/>
<accession>B8D7K4</accession>
<comment type="function">
    <text evidence="1">Catalyzes the reversible conversion of 3-phosphohydroxypyruvate to phosphoserine and of 3-hydroxy-2-oxo-4-phosphonooxybutanoate to phosphohydroxythreonine.</text>
</comment>
<comment type="catalytic activity">
    <reaction evidence="1">
        <text>O-phospho-L-serine + 2-oxoglutarate = 3-phosphooxypyruvate + L-glutamate</text>
        <dbReference type="Rhea" id="RHEA:14329"/>
        <dbReference type="ChEBI" id="CHEBI:16810"/>
        <dbReference type="ChEBI" id="CHEBI:18110"/>
        <dbReference type="ChEBI" id="CHEBI:29985"/>
        <dbReference type="ChEBI" id="CHEBI:57524"/>
        <dbReference type="EC" id="2.6.1.52"/>
    </reaction>
</comment>
<comment type="catalytic activity">
    <reaction evidence="1">
        <text>4-(phosphooxy)-L-threonine + 2-oxoglutarate = (R)-3-hydroxy-2-oxo-4-phosphooxybutanoate + L-glutamate</text>
        <dbReference type="Rhea" id="RHEA:16573"/>
        <dbReference type="ChEBI" id="CHEBI:16810"/>
        <dbReference type="ChEBI" id="CHEBI:29985"/>
        <dbReference type="ChEBI" id="CHEBI:58452"/>
        <dbReference type="ChEBI" id="CHEBI:58538"/>
        <dbReference type="EC" id="2.6.1.52"/>
    </reaction>
</comment>
<comment type="cofactor">
    <cofactor evidence="1">
        <name>pyridoxal 5'-phosphate</name>
        <dbReference type="ChEBI" id="CHEBI:597326"/>
    </cofactor>
    <text evidence="1">Binds 1 pyridoxal phosphate per subunit.</text>
</comment>
<comment type="pathway">
    <text evidence="1">Amino-acid biosynthesis; L-serine biosynthesis; L-serine from 3-phospho-D-glycerate: step 2/3.</text>
</comment>
<comment type="pathway">
    <text evidence="1">Cofactor biosynthesis; pyridoxine 5'-phosphate biosynthesis; pyridoxine 5'-phosphate from D-erythrose 4-phosphate: step 3/5.</text>
</comment>
<comment type="subunit">
    <text evidence="1">Homodimer.</text>
</comment>
<comment type="subcellular location">
    <subcellularLocation>
        <location evidence="1">Cytoplasm</location>
    </subcellularLocation>
</comment>
<comment type="similarity">
    <text evidence="1">Belongs to the class-V pyridoxal-phosphate-dependent aminotransferase family. SerC subfamily.</text>
</comment>
<protein>
    <recommendedName>
        <fullName evidence="1">Phosphoserine aminotransferase</fullName>
        <ecNumber evidence="1">2.6.1.52</ecNumber>
    </recommendedName>
    <alternativeName>
        <fullName evidence="1">Phosphohydroxythreonine aminotransferase</fullName>
        <shortName evidence="1">PSAT</shortName>
    </alternativeName>
</protein>
<sequence length="361" mass="41248">MNLIYNFSAGPAMIPRDVLNQAKKELHNWKNLGSSIMEISHRSEEFIQMALEAEKDLRDLLKIPDSFKVLFCQGGARGQFSAIPMNLLNNLQTADYINSGYWSNSAFMEAKKYCTPRSIFIRETNGVKESLLPMHKWNINENSAYIHYCPNETIDGLSIYEEPVFENKIIVGDFSSFILSRSINIKNYDLIYAGAQKNIGPAGITIIIIRKNIIGSSSKMTPSILDYKKISDHHSMFNTPPTFAWYLSGLVFKWLKKQGGLKAIEKLNKKKSDLLYKKIDNSDFYINKINSKHRSQMNVVFHLVNPKLNYIFLKEASKTGLNYLRGHSIVGGMRASLYNAMPLEGVESLVKFMSYFEKRYG</sequence>
<reference key="1">
    <citation type="journal article" date="2009" name="Science">
        <title>The dynamics and time scale of ongoing genomic erosion in symbiotic bacteria.</title>
        <authorList>
            <person name="Moran N.A."/>
            <person name="McLaughlin H.J."/>
            <person name="Sorek R."/>
        </authorList>
    </citation>
    <scope>NUCLEOTIDE SEQUENCE [LARGE SCALE GENOMIC DNA]</scope>
    <source>
        <strain>Tuc7</strain>
    </source>
</reference>
<name>SERC_BUCAT</name>
<keyword id="KW-0028">Amino-acid biosynthesis</keyword>
<keyword id="KW-0032">Aminotransferase</keyword>
<keyword id="KW-0963">Cytoplasm</keyword>
<keyword id="KW-0663">Pyridoxal phosphate</keyword>
<keyword id="KW-0664">Pyridoxine biosynthesis</keyword>
<keyword id="KW-0718">Serine biosynthesis</keyword>
<keyword id="KW-0808">Transferase</keyword>
<evidence type="ECO:0000255" key="1">
    <source>
        <dbReference type="HAMAP-Rule" id="MF_00160"/>
    </source>
</evidence>
<gene>
    <name evidence="1" type="primary">serC</name>
    <name type="ordered locus">BUAPTUC7_306</name>
</gene>